<dbReference type="EMBL" id="J02160">
    <property type="protein sequence ID" value="AAA43199.1"/>
    <property type="molecule type" value="Genomic_RNA"/>
</dbReference>
<dbReference type="SMR" id="P03447"/>
<dbReference type="GlyCosmos" id="P03447">
    <property type="glycosylation" value="3 sites, No reported glycans"/>
</dbReference>
<dbReference type="GO" id="GO:0020002">
    <property type="term" value="C:host cell plasma membrane"/>
    <property type="evidence" value="ECO:0007669"/>
    <property type="project" value="UniProtKB-SubCell"/>
</dbReference>
<dbReference type="GO" id="GO:0016020">
    <property type="term" value="C:membrane"/>
    <property type="evidence" value="ECO:0007669"/>
    <property type="project" value="UniProtKB-KW"/>
</dbReference>
<dbReference type="GO" id="GO:0019031">
    <property type="term" value="C:viral envelope"/>
    <property type="evidence" value="ECO:0007669"/>
    <property type="project" value="UniProtKB-KW"/>
</dbReference>
<dbReference type="GO" id="GO:0055036">
    <property type="term" value="C:virion membrane"/>
    <property type="evidence" value="ECO:0007669"/>
    <property type="project" value="UniProtKB-SubCell"/>
</dbReference>
<dbReference type="GO" id="GO:0046789">
    <property type="term" value="F:host cell surface receptor binding"/>
    <property type="evidence" value="ECO:0007669"/>
    <property type="project" value="InterPro"/>
</dbReference>
<dbReference type="GO" id="GO:0075512">
    <property type="term" value="P:clathrin-dependent endocytosis of virus by host cell"/>
    <property type="evidence" value="ECO:0007669"/>
    <property type="project" value="UniProtKB-KW"/>
</dbReference>
<dbReference type="GO" id="GO:0039654">
    <property type="term" value="P:fusion of virus membrane with host endosome membrane"/>
    <property type="evidence" value="ECO:0007669"/>
    <property type="project" value="UniProtKB-KW"/>
</dbReference>
<dbReference type="GO" id="GO:0019064">
    <property type="term" value="P:fusion of virus membrane with host plasma membrane"/>
    <property type="evidence" value="ECO:0007669"/>
    <property type="project" value="InterPro"/>
</dbReference>
<dbReference type="GO" id="GO:0019062">
    <property type="term" value="P:virion attachment to host cell"/>
    <property type="evidence" value="ECO:0007669"/>
    <property type="project" value="UniProtKB-KW"/>
</dbReference>
<dbReference type="Gene3D" id="3.90.209.20">
    <property type="match status" value="1"/>
</dbReference>
<dbReference type="Gene3D" id="2.10.77.10">
    <property type="entry name" value="Hemagglutinin Chain A, Domain 2"/>
    <property type="match status" value="1"/>
</dbReference>
<dbReference type="InterPro" id="IPR008980">
    <property type="entry name" value="Capsid_hemagglutn"/>
</dbReference>
<dbReference type="InterPro" id="IPR013828">
    <property type="entry name" value="Hemagglutn_HA1_a/b_dom_sf"/>
</dbReference>
<dbReference type="InterPro" id="IPR000149">
    <property type="entry name" value="Hemagglutn_influenz_A"/>
</dbReference>
<dbReference type="InterPro" id="IPR001364">
    <property type="entry name" value="Hemagglutn_influenz_A/B"/>
</dbReference>
<dbReference type="Pfam" id="PF00509">
    <property type="entry name" value="Hemagglutinin"/>
    <property type="match status" value="1"/>
</dbReference>
<dbReference type="PRINTS" id="PR00330">
    <property type="entry name" value="HEMAGGLUTN1"/>
</dbReference>
<dbReference type="SUPFAM" id="SSF49818">
    <property type="entry name" value="Viral protein domain"/>
    <property type="match status" value="1"/>
</dbReference>
<protein>
    <recommendedName>
        <fullName>Hemagglutinin</fullName>
    </recommendedName>
    <component>
        <recommendedName>
            <fullName>Hemagglutinin HA1 chain</fullName>
        </recommendedName>
    </component>
</protein>
<organism>
    <name type="scientific">Influenza A virus (strain A/Shearwater/Australia/1975 H5N3)</name>
    <dbReference type="NCBI Taxonomy" id="11462"/>
    <lineage>
        <taxon>Viruses</taxon>
        <taxon>Riboviria</taxon>
        <taxon>Orthornavirae</taxon>
        <taxon>Negarnaviricota</taxon>
        <taxon>Polyploviricotina</taxon>
        <taxon>Insthoviricetes</taxon>
        <taxon>Articulavirales</taxon>
        <taxon>Orthomyxoviridae</taxon>
        <taxon>Alphainfluenzavirus</taxon>
        <taxon>Alphainfluenzavirus influenzae</taxon>
        <taxon>Influenza A virus</taxon>
    </lineage>
</organism>
<organismHost>
    <name type="scientific">Aves</name>
    <dbReference type="NCBI Taxonomy" id="8782"/>
</organismHost>
<comment type="function">
    <text>Binds to sialic acid-containing receptors on the cell surface, bringing about the attachment of the virus particle to the cell. This attachment induces virion internalization of about two third of the virus particles through clathrin-dependent endocytosis and about one third through a clathrin- and caveolin-independent pathway. Plays a major role in the determination of host range restriction and virulence. Class I viral fusion protein. Responsible for penetration of the virus into the cell cytoplasm by mediating the fusion of the membrane of the endocytosed virus particle with the endosomal membrane. Low pH in endosomes induces an irreversible conformational change in HA2, releasing the fusion hydrophobic peptide. Several trimers are required to form a competent fusion pore.</text>
</comment>
<comment type="subunit">
    <text>Homotrimer of disulfide-linked HA1-HA2.</text>
</comment>
<comment type="subcellular location">
    <subcellularLocation>
        <location evidence="3">Virion membrane</location>
        <topology evidence="3">Single-pass type I membrane protein</topology>
    </subcellularLocation>
    <subcellularLocation>
        <location>Host apical cell membrane</location>
        <topology>Single-pass type I membrane protein</topology>
    </subcellularLocation>
    <text>Targeted to the apical plasma membrane in epithelial polarized cells through a signal present in the transmembrane domain. Associated with glycosphingolipid- and cholesterol-enriched detergent-resistant lipid rafts.</text>
</comment>
<comment type="PTM">
    <text evidence="1">In natural infection, inactive HA is matured into HA1 and HA2 outside the cell by one or more trypsin-like, arginine-specific endoprotease secreted by the bronchial epithelial cells. One identified protease that may be involved in this process is secreted in lungs by club cells (By similarity).</text>
</comment>
<comment type="PTM">
    <text evidence="1">Palmitoylated.</text>
</comment>
<comment type="miscellaneous">
    <text>Major glycoprotein, comprises over 80% of the envelope proteins present in virus particle.</text>
</comment>
<comment type="miscellaneous">
    <text>The extent of infection into host organism is determined by HA. Influenza viruses bud from the apical surface of polarized epithelial cells (e.g. bronchial epithelial cells) into lumen of lungs and are therefore usually pneumotropic. The reason is that HA is cleaved by tryptase clara which is restricted to lungs. However, HAs of H5 and H7 pantropic avian viruses subtypes can be cleaved by furin and subtilisin-type enzymes, allowing the virus to grow in other organs than lungs.</text>
</comment>
<comment type="miscellaneous">
    <text>The influenza A genome consist of 8 RNA segments. Genetic variation of hemagglutinin and/or neuraminidase genes results in the emergence of new influenza strains. The mechanism of variation can be the result of point mutations or the result of genetic reassortment between segments of two different strains.</text>
</comment>
<comment type="similarity">
    <text evidence="3">Belongs to the influenza viruses hemagglutinin family.</text>
</comment>
<gene>
    <name type="primary">HA</name>
</gene>
<reference key="1">
    <citation type="journal article" date="1981" name="Proc. Natl. Acad. Sci. U.S.A.">
        <title>Sequence relationships among the hemagglutinin genes of 12 subtypes of influenza A virus.</title>
        <authorList>
            <person name="Air G.M."/>
        </authorList>
    </citation>
    <scope>NUCLEOTIDE SEQUENCE [GENOMIC RNA]</scope>
</reference>
<feature type="signal peptide" evidence="2">
    <location>
        <begin position="1"/>
        <end position="16"/>
    </location>
</feature>
<feature type="chain" id="PRO_0000039044" description="Hemagglutinin HA1 chain">
    <location>
        <begin position="17"/>
        <end position="109" status="greater than"/>
    </location>
</feature>
<feature type="glycosylation site" description="N-linked (GlcNAc...) asparagine; by host" evidence="2">
    <location>
        <position position="26"/>
    </location>
</feature>
<feature type="glycosylation site" description="N-linked (GlcNAc...) asparagine; by host" evidence="2">
    <location>
        <position position="27"/>
    </location>
</feature>
<feature type="glycosylation site" description="N-linked (GlcNAc...) asparagine; by host" evidence="2">
    <location>
        <position position="39"/>
    </location>
</feature>
<feature type="disulfide bond" evidence="1">
    <location>
        <begin position="71"/>
        <end position="83"/>
    </location>
</feature>
<feature type="non-terminal residue">
    <location>
        <position position="109"/>
    </location>
</feature>
<sequence>MERVVLLLAMISLVKSDQICIGYHANNSTEQVDTIMEKNVTVTHAQDILEKTHNGKLCSLNGVKPLILRDCSVAGWLLGNPMCDEFLTVPEWSYIVEKDNPINGLCYPG</sequence>
<keyword id="KW-1167">Clathrin- and caveolin-independent endocytosis of virus by host</keyword>
<keyword id="KW-1165">Clathrin-mediated endocytosis of virus by host</keyword>
<keyword id="KW-1015">Disulfide bond</keyword>
<keyword id="KW-1170">Fusion of virus membrane with host endosomal membrane</keyword>
<keyword id="KW-1168">Fusion of virus membrane with host membrane</keyword>
<keyword id="KW-0325">Glycoprotein</keyword>
<keyword id="KW-0348">Hemagglutinin</keyword>
<keyword id="KW-1032">Host cell membrane</keyword>
<keyword id="KW-1043">Host membrane</keyword>
<keyword id="KW-0945">Host-virus interaction</keyword>
<keyword id="KW-0449">Lipoprotein</keyword>
<keyword id="KW-0472">Membrane</keyword>
<keyword id="KW-0564">Palmitate</keyword>
<keyword id="KW-0732">Signal</keyword>
<keyword id="KW-0812">Transmembrane</keyword>
<keyword id="KW-1161">Viral attachment to host cell</keyword>
<keyword id="KW-0261">Viral envelope protein</keyword>
<keyword id="KW-1162">Viral penetration into host cytoplasm</keyword>
<keyword id="KW-0946">Virion</keyword>
<keyword id="KW-1164">Virus endocytosis by host</keyword>
<keyword id="KW-1160">Virus entry into host cell</keyword>
<evidence type="ECO:0000250" key="1"/>
<evidence type="ECO:0000255" key="2"/>
<evidence type="ECO:0000305" key="3"/>
<proteinExistence type="inferred from homology"/>
<name>HEMA_I75A1</name>
<accession>P03447</accession>